<sequence length="637" mass="67855">MGGSSKTVRKLEVATPVPADIDIANAVEPLHIADIAADLNLSPRHYDLYGKYKAKVLLSVLDEVQETQDGYYVVVGGITPTPLGEGKSTTTVGLCQALGAFLDKKVVTCLRQPSQGPTFGIKGGAAGGGYSQVIPMDEFNLHLTGDIHAITASNNLLAAAIDTRMFHESTQSDKALFNRLCPPNKEGKRTFCNIMHRRLKKLGIDKTNPDDLTPEEVTKFARLDIDPDSITWRRVMDVNDRFLRKISVGQGPDEKGMVRETGFDISVASEIMAVLALTTSLADMRERLGKMVIGNSKAGEPITADDLGLGGALTVLMKDAINPTLMQTLEGTPVLVHAGPFANIAHGNSSIVADKIALKLVGPGGFVVTEAGFGSDIGTEKFMNIKCRYSGLTPQCAIVVATVRALKMHGGGPQVVAGKPLDRAYLTENVGLVEAGCVNLARHIINTKAYGSNVVVAINMFSSDTEAELNAVKKAAMDAGAFDAVICTHHAHGGKGAVDLGIAVQKACENVTQPLRFLYPLDISIKEKIEAIAKSYGAAGVEYSEQAEKKIEMYSKQGFSNLPICMAKTQYSFSHNAAEKGAPSGFILPIRDVRGSIGAGFIYPLVGTMSTMPGLPTRPCFFDIDLDTTTGKVIGLS</sequence>
<dbReference type="EC" id="6.3.4.3"/>
<dbReference type="EMBL" id="M83940">
    <property type="protein sequence ID" value="AAA34046.1"/>
    <property type="molecule type" value="mRNA"/>
</dbReference>
<dbReference type="PIR" id="A40948">
    <property type="entry name" value="A40948"/>
</dbReference>
<dbReference type="PIR" id="A43350">
    <property type="entry name" value="A43350"/>
</dbReference>
<dbReference type="SMR" id="P28723"/>
<dbReference type="UniPathway" id="UPA00193"/>
<dbReference type="Proteomes" id="UP001155700">
    <property type="component" value="Unplaced"/>
</dbReference>
<dbReference type="GO" id="GO:0005524">
    <property type="term" value="F:ATP binding"/>
    <property type="evidence" value="ECO:0007669"/>
    <property type="project" value="UniProtKB-KW"/>
</dbReference>
<dbReference type="GO" id="GO:0004329">
    <property type="term" value="F:formate-tetrahydrofolate ligase activity"/>
    <property type="evidence" value="ECO:0007669"/>
    <property type="project" value="UniProtKB-EC"/>
</dbReference>
<dbReference type="GO" id="GO:0035999">
    <property type="term" value="P:tetrahydrofolate interconversion"/>
    <property type="evidence" value="ECO:0007669"/>
    <property type="project" value="UniProtKB-UniPathway"/>
</dbReference>
<dbReference type="CDD" id="cd00477">
    <property type="entry name" value="FTHFS"/>
    <property type="match status" value="1"/>
</dbReference>
<dbReference type="FunFam" id="3.40.50.300:FF:000245">
    <property type="entry name" value="C-1-tetrahydrofolate synthase, cytoplasmic"/>
    <property type="match status" value="1"/>
</dbReference>
<dbReference type="FunFam" id="3.40.50.300:FF:001123">
    <property type="entry name" value="C-1-tetrahydrofolate synthase, cytoplasmic isoform X2"/>
    <property type="match status" value="1"/>
</dbReference>
<dbReference type="FunFam" id="1.10.8.770:FF:000001">
    <property type="entry name" value="Methylenetetrahydrofolate dehydrogenase (NADP+ dependent) 1 like"/>
    <property type="match status" value="1"/>
</dbReference>
<dbReference type="FunFam" id="3.10.410.10:FF:000001">
    <property type="entry name" value="Putative formate--tetrahydrofolate ligase"/>
    <property type="match status" value="1"/>
</dbReference>
<dbReference type="Gene3D" id="1.10.8.770">
    <property type="match status" value="1"/>
</dbReference>
<dbReference type="Gene3D" id="3.10.410.10">
    <property type="entry name" value="Formyltetrahydrofolate synthetase, domain 3"/>
    <property type="match status" value="1"/>
</dbReference>
<dbReference type="Gene3D" id="3.40.50.300">
    <property type="entry name" value="P-loop containing nucleotide triphosphate hydrolases"/>
    <property type="match status" value="2"/>
</dbReference>
<dbReference type="HAMAP" id="MF_01543">
    <property type="entry name" value="FTHFS"/>
    <property type="match status" value="1"/>
</dbReference>
<dbReference type="InterPro" id="IPR000559">
    <property type="entry name" value="Formate_THF_ligase"/>
</dbReference>
<dbReference type="InterPro" id="IPR020628">
    <property type="entry name" value="Formate_THF_ligase_CS"/>
</dbReference>
<dbReference type="InterPro" id="IPR027417">
    <property type="entry name" value="P-loop_NTPase"/>
</dbReference>
<dbReference type="Pfam" id="PF01268">
    <property type="entry name" value="FTHFS"/>
    <property type="match status" value="1"/>
</dbReference>
<dbReference type="SUPFAM" id="SSF52540">
    <property type="entry name" value="P-loop containing nucleoside triphosphate hydrolases"/>
    <property type="match status" value="1"/>
</dbReference>
<dbReference type="PROSITE" id="PS00721">
    <property type="entry name" value="FTHFS_1"/>
    <property type="match status" value="1"/>
</dbReference>
<dbReference type="PROSITE" id="PS00722">
    <property type="entry name" value="FTHFS_2"/>
    <property type="match status" value="1"/>
</dbReference>
<evidence type="ECO:0000250" key="1"/>
<evidence type="ECO:0000269" key="2">
    <source>
    </source>
</evidence>
<evidence type="ECO:0000305" key="3"/>
<reference key="1">
    <citation type="journal article" date="1992" name="J. Biol. Chem.">
        <title>Isolation and sequencing of the cDNA coding for spinach 10-formyltetrahydrofolate synthetase. Comparisons with the yeast, mammalian, and bacterial proteins.</title>
        <authorList>
            <person name="Nour J.M."/>
            <person name="Rabinowitz J.C."/>
        </authorList>
    </citation>
    <scope>NUCLEOTIDE SEQUENCE [MRNA]</scope>
</reference>
<reference key="2">
    <citation type="journal article" date="1991" name="J. Biol. Chem.">
        <title>Isolation, characterization, and structural organization of 10-formyltetrahydrofolate synthetase from spinach leaves.</title>
        <authorList>
            <person name="Nour J.M."/>
            <person name="Rabinowitz J.C."/>
        </authorList>
    </citation>
    <scope>PROTEIN SEQUENCE OF 2-36</scope>
    <source>
        <tissue>Leaf</tissue>
    </source>
</reference>
<protein>
    <recommendedName>
        <fullName>Formate--tetrahydrofolate ligase</fullName>
        <ecNumber>6.3.4.3</ecNumber>
    </recommendedName>
    <alternativeName>
        <fullName>10-formyletrahydrofolate synthetase</fullName>
        <shortName>FHS</shortName>
        <shortName>FTHFS</shortName>
    </alternativeName>
    <alternativeName>
        <fullName>Formyltetrahydrofolate synthetase</fullName>
    </alternativeName>
</protein>
<organism>
    <name type="scientific">Spinacia oleracea</name>
    <name type="common">Spinach</name>
    <dbReference type="NCBI Taxonomy" id="3562"/>
    <lineage>
        <taxon>Eukaryota</taxon>
        <taxon>Viridiplantae</taxon>
        <taxon>Streptophyta</taxon>
        <taxon>Embryophyta</taxon>
        <taxon>Tracheophyta</taxon>
        <taxon>Spermatophyta</taxon>
        <taxon>Magnoliopsida</taxon>
        <taxon>eudicotyledons</taxon>
        <taxon>Gunneridae</taxon>
        <taxon>Pentapetalae</taxon>
        <taxon>Caryophyllales</taxon>
        <taxon>Chenopodiaceae</taxon>
        <taxon>Chenopodioideae</taxon>
        <taxon>Anserineae</taxon>
        <taxon>Spinacia</taxon>
    </lineage>
</organism>
<name>FTHS_SPIOL</name>
<comment type="catalytic activity">
    <reaction>
        <text>(6S)-5,6,7,8-tetrahydrofolate + formate + ATP = (6R)-10-formyltetrahydrofolate + ADP + phosphate</text>
        <dbReference type="Rhea" id="RHEA:20221"/>
        <dbReference type="ChEBI" id="CHEBI:15740"/>
        <dbReference type="ChEBI" id="CHEBI:30616"/>
        <dbReference type="ChEBI" id="CHEBI:43474"/>
        <dbReference type="ChEBI" id="CHEBI:57453"/>
        <dbReference type="ChEBI" id="CHEBI:195366"/>
        <dbReference type="ChEBI" id="CHEBI:456216"/>
        <dbReference type="EC" id="6.3.4.3"/>
    </reaction>
</comment>
<comment type="pathway">
    <text>One-carbon metabolism; tetrahydrofolate interconversion.</text>
</comment>
<comment type="subunit">
    <text>Homodimer.</text>
</comment>
<comment type="similarity">
    <text evidence="3">Belongs to the formate--tetrahydrofolate ligase family.</text>
</comment>
<feature type="initiator methionine" description="Removed" evidence="2">
    <location>
        <position position="1"/>
    </location>
</feature>
<feature type="chain" id="PRO_0000199418" description="Formate--tetrahydrofolate ligase">
    <location>
        <begin position="2"/>
        <end position="637"/>
    </location>
</feature>
<feature type="binding site" evidence="1">
    <location>
        <begin position="81"/>
        <end position="88"/>
    </location>
    <ligand>
        <name>ATP</name>
        <dbReference type="ChEBI" id="CHEBI:30616"/>
    </ligand>
</feature>
<accession>P28723</accession>
<proteinExistence type="evidence at protein level"/>
<keyword id="KW-0067">ATP-binding</keyword>
<keyword id="KW-0903">Direct protein sequencing</keyword>
<keyword id="KW-0436">Ligase</keyword>
<keyword id="KW-0547">Nucleotide-binding</keyword>
<keyword id="KW-0554">One-carbon metabolism</keyword>
<keyword id="KW-1185">Reference proteome</keyword>